<comment type="function">
    <text evidence="1">Phosphatase involved in the biosynthesis of decaprenylphosphoryl arabinose (DPA), which serves as the arabinose donor for the biosynthesis of arabinogalactan, the major mycobacterial cell wall polysaccharide (By similarity). Catalyzes the dephosphorylation of decaprenylphosphoryl-5-phosphoribose (DPPR) to decaprenyl-phosphoribose (DPR) (By similarity).</text>
</comment>
<comment type="catalytic activity">
    <reaction evidence="1">
        <text>trans,octa-cis-decaprenylphospho-beta-D-ribofuranose 5-phosphate + H2O = trans,octa-cis-decaprenylphospho-beta-D-ribofuranose + phosphate</text>
        <dbReference type="Rhea" id="RHEA:80895"/>
        <dbReference type="ChEBI" id="CHEBI:15377"/>
        <dbReference type="ChEBI" id="CHEBI:43474"/>
        <dbReference type="ChEBI" id="CHEBI:66881"/>
        <dbReference type="ChEBI" id="CHEBI:66937"/>
        <dbReference type="EC" id="3.1.3.111"/>
    </reaction>
    <physiologicalReaction direction="left-to-right" evidence="1">
        <dbReference type="Rhea" id="RHEA:80896"/>
    </physiologicalReaction>
</comment>
<comment type="pathway">
    <text evidence="1">Cell wall biogenesis; cell wall polysaccharide biosynthesis.</text>
</comment>
<comment type="subcellular location">
    <subcellularLocation>
        <location evidence="4">Cell membrane</location>
        <topology evidence="3">Multi-pass membrane protein</topology>
    </subcellularLocation>
</comment>
<comment type="similarity">
    <text evidence="4">Belongs to the PA-phosphatase related phosphoesterase family.</text>
</comment>
<comment type="sequence caution" evidence="2">
    <conflict type="erroneous initiation">
        <sequence resource="EMBL-CDS" id="AAK48280"/>
    </conflict>
    <text>Truncated N-terminus.</text>
</comment>
<sequence length="177" mass="18486">MAERAPRGEVAVMVAVQSALVDRPGMLATARGLSHFGEHCIGWLILALLGAIALPRRRREWLVAGAGAFVAHAIAVLIKRLVRRQRPDHPAIAVNVDTPSQLSFPSAHATSTTAAALLMGRATGLPLPVVLVPPMALSRILLGVHYPSDVAVGVALGATVGAIVDSVGGGRQRARKR</sequence>
<name>DPRP_MYCTO</name>
<dbReference type="EC" id="3.1.3.111" evidence="1"/>
<dbReference type="EMBL" id="AE000516">
    <property type="protein sequence ID" value="AAK48280.1"/>
    <property type="status" value="ALT_INIT"/>
    <property type="molecule type" value="Genomic_DNA"/>
</dbReference>
<dbReference type="PIR" id="C70888">
    <property type="entry name" value="C70888"/>
</dbReference>
<dbReference type="RefSeq" id="WP_003899705.1">
    <property type="nucleotide sequence ID" value="NZ_KK341227.1"/>
</dbReference>
<dbReference type="SMR" id="P9WI52"/>
<dbReference type="KEGG" id="mtc:MT3914"/>
<dbReference type="PATRIC" id="fig|83331.31.peg.4211"/>
<dbReference type="HOGENOM" id="CLU_072573_7_1_11"/>
<dbReference type="UniPathway" id="UPA00963"/>
<dbReference type="Proteomes" id="UP000001020">
    <property type="component" value="Chromosome"/>
</dbReference>
<dbReference type="GO" id="GO:0005886">
    <property type="term" value="C:plasma membrane"/>
    <property type="evidence" value="ECO:0007669"/>
    <property type="project" value="UniProtKB-SubCell"/>
</dbReference>
<dbReference type="GO" id="GO:0016787">
    <property type="term" value="F:hydrolase activity"/>
    <property type="evidence" value="ECO:0007669"/>
    <property type="project" value="UniProtKB-KW"/>
</dbReference>
<dbReference type="GO" id="GO:0045227">
    <property type="term" value="P:capsule polysaccharide biosynthetic process"/>
    <property type="evidence" value="ECO:0007669"/>
    <property type="project" value="UniProtKB-UniPathway"/>
</dbReference>
<dbReference type="GO" id="GO:0071555">
    <property type="term" value="P:cell wall organization"/>
    <property type="evidence" value="ECO:0007669"/>
    <property type="project" value="UniProtKB-KW"/>
</dbReference>
<dbReference type="CDD" id="cd01610">
    <property type="entry name" value="PAP2_like"/>
    <property type="match status" value="1"/>
</dbReference>
<dbReference type="Gene3D" id="1.20.144.10">
    <property type="entry name" value="Phosphatidic acid phosphatase type 2/haloperoxidase"/>
    <property type="match status" value="1"/>
</dbReference>
<dbReference type="InterPro" id="IPR036938">
    <property type="entry name" value="P_Acid_Pase_2/haloperoxi_sf"/>
</dbReference>
<dbReference type="InterPro" id="IPR000326">
    <property type="entry name" value="P_Acid_Pase_2/haloperoxidase"/>
</dbReference>
<dbReference type="PANTHER" id="PTHR14969:SF62">
    <property type="entry name" value="DECAPRENYLPHOSPHORYL-5-PHOSPHORIBOSE PHOSPHATASE RV3807C-RELATED"/>
    <property type="match status" value="1"/>
</dbReference>
<dbReference type="PANTHER" id="PTHR14969">
    <property type="entry name" value="SPHINGOSINE-1-PHOSPHATE PHOSPHOHYDROLASE"/>
    <property type="match status" value="1"/>
</dbReference>
<dbReference type="Pfam" id="PF01569">
    <property type="entry name" value="PAP2"/>
    <property type="match status" value="1"/>
</dbReference>
<dbReference type="SMART" id="SM00014">
    <property type="entry name" value="acidPPc"/>
    <property type="match status" value="1"/>
</dbReference>
<dbReference type="SUPFAM" id="SSF48317">
    <property type="entry name" value="Acid phosphatase/Vanadium-dependent haloperoxidase"/>
    <property type="match status" value="1"/>
</dbReference>
<proteinExistence type="inferred from homology"/>
<accession>P9WI52</accession>
<accession>F2GDG6</accession>
<accession>L0TGM5</accession>
<accession>O53584</accession>
<accession>Q7D4U5</accession>
<feature type="chain" id="PRO_0000428067" description="Decaprenylphosphoryl-5-phosphoribose phosphatase">
    <location>
        <begin position="1"/>
        <end position="177"/>
    </location>
</feature>
<feature type="transmembrane region" description="Helical" evidence="3">
    <location>
        <begin position="35"/>
        <end position="55"/>
    </location>
</feature>
<feature type="transmembrane region" description="Helical" evidence="3">
    <location>
        <begin position="62"/>
        <end position="82"/>
    </location>
</feature>
<feature type="transmembrane region" description="Helical" evidence="3">
    <location>
        <begin position="124"/>
        <end position="144"/>
    </location>
</feature>
<feature type="transmembrane region" description="Helical" evidence="3">
    <location>
        <begin position="150"/>
        <end position="170"/>
    </location>
</feature>
<protein>
    <recommendedName>
        <fullName evidence="1">Decaprenylphosphoryl-5-phosphoribose phosphatase</fullName>
        <shortName evidence="1">DPPR phosphatase</shortName>
        <ecNumber evidence="1">3.1.3.111</ecNumber>
    </recommendedName>
    <alternativeName>
        <fullName evidence="1">Phospholipid phosphatase</fullName>
    </alternativeName>
</protein>
<organism>
    <name type="scientific">Mycobacterium tuberculosis (strain CDC 1551 / Oshkosh)</name>
    <dbReference type="NCBI Taxonomy" id="83331"/>
    <lineage>
        <taxon>Bacteria</taxon>
        <taxon>Bacillati</taxon>
        <taxon>Actinomycetota</taxon>
        <taxon>Actinomycetes</taxon>
        <taxon>Mycobacteriales</taxon>
        <taxon>Mycobacteriaceae</taxon>
        <taxon>Mycobacterium</taxon>
        <taxon>Mycobacterium tuberculosis complex</taxon>
    </lineage>
</organism>
<reference key="1">
    <citation type="journal article" date="2002" name="J. Bacteriol.">
        <title>Whole-genome comparison of Mycobacterium tuberculosis clinical and laboratory strains.</title>
        <authorList>
            <person name="Fleischmann R.D."/>
            <person name="Alland D."/>
            <person name="Eisen J.A."/>
            <person name="Carpenter L."/>
            <person name="White O."/>
            <person name="Peterson J.D."/>
            <person name="DeBoy R.T."/>
            <person name="Dodson R.J."/>
            <person name="Gwinn M.L."/>
            <person name="Haft D.H."/>
            <person name="Hickey E.K."/>
            <person name="Kolonay J.F."/>
            <person name="Nelson W.C."/>
            <person name="Umayam L.A."/>
            <person name="Ermolaeva M.D."/>
            <person name="Salzberg S.L."/>
            <person name="Delcher A."/>
            <person name="Utterback T.R."/>
            <person name="Weidman J.F."/>
            <person name="Khouri H.M."/>
            <person name="Gill J."/>
            <person name="Mikula A."/>
            <person name="Bishai W."/>
            <person name="Jacobs W.R. Jr."/>
            <person name="Venter J.C."/>
            <person name="Fraser C.M."/>
        </authorList>
    </citation>
    <scope>NUCLEOTIDE SEQUENCE [LARGE SCALE GENOMIC DNA]</scope>
    <source>
        <strain>CDC 1551 / Oshkosh</strain>
    </source>
</reference>
<evidence type="ECO:0000250" key="1">
    <source>
        <dbReference type="UniProtKB" id="A0R627"/>
    </source>
</evidence>
<evidence type="ECO:0000250" key="2">
    <source>
        <dbReference type="UniProtKB" id="P9WI53"/>
    </source>
</evidence>
<evidence type="ECO:0000255" key="3"/>
<evidence type="ECO:0000305" key="4"/>
<keyword id="KW-1003">Cell membrane</keyword>
<keyword id="KW-0961">Cell wall biogenesis/degradation</keyword>
<keyword id="KW-0378">Hydrolase</keyword>
<keyword id="KW-0472">Membrane</keyword>
<keyword id="KW-1185">Reference proteome</keyword>
<keyword id="KW-0812">Transmembrane</keyword>
<keyword id="KW-1133">Transmembrane helix</keyword>
<gene>
    <name type="ordered locus">MT3914</name>
</gene>